<proteinExistence type="inferred from homology"/>
<organism>
    <name type="scientific">Shewanella sp. (strain W3-18-1)</name>
    <dbReference type="NCBI Taxonomy" id="351745"/>
    <lineage>
        <taxon>Bacteria</taxon>
        <taxon>Pseudomonadati</taxon>
        <taxon>Pseudomonadota</taxon>
        <taxon>Gammaproteobacteria</taxon>
        <taxon>Alteromonadales</taxon>
        <taxon>Shewanellaceae</taxon>
        <taxon>Shewanella</taxon>
    </lineage>
</organism>
<protein>
    <recommendedName>
        <fullName evidence="1">S-adenosylmethionine:tRNA ribosyltransferase-isomerase</fullName>
        <ecNumber evidence="1">2.4.99.17</ecNumber>
    </recommendedName>
    <alternativeName>
        <fullName evidence="1">Queuosine biosynthesis protein QueA</fullName>
    </alternativeName>
</protein>
<feature type="chain" id="PRO_1000015277" description="S-adenosylmethionine:tRNA ribosyltransferase-isomerase">
    <location>
        <begin position="1"/>
        <end position="345"/>
    </location>
</feature>
<comment type="function">
    <text evidence="1">Transfers and isomerizes the ribose moiety from AdoMet to the 7-aminomethyl group of 7-deazaguanine (preQ1-tRNA) to give epoxyqueuosine (oQ-tRNA).</text>
</comment>
<comment type="catalytic activity">
    <reaction evidence="1">
        <text>7-aminomethyl-7-carbaguanosine(34) in tRNA + S-adenosyl-L-methionine = epoxyqueuosine(34) in tRNA + adenine + L-methionine + 2 H(+)</text>
        <dbReference type="Rhea" id="RHEA:32155"/>
        <dbReference type="Rhea" id="RHEA-COMP:10342"/>
        <dbReference type="Rhea" id="RHEA-COMP:18582"/>
        <dbReference type="ChEBI" id="CHEBI:15378"/>
        <dbReference type="ChEBI" id="CHEBI:16708"/>
        <dbReference type="ChEBI" id="CHEBI:57844"/>
        <dbReference type="ChEBI" id="CHEBI:59789"/>
        <dbReference type="ChEBI" id="CHEBI:82833"/>
        <dbReference type="ChEBI" id="CHEBI:194443"/>
        <dbReference type="EC" id="2.4.99.17"/>
    </reaction>
</comment>
<comment type="pathway">
    <text evidence="1">tRNA modification; tRNA-queuosine biosynthesis.</text>
</comment>
<comment type="subunit">
    <text evidence="1">Monomer.</text>
</comment>
<comment type="subcellular location">
    <subcellularLocation>
        <location evidence="1">Cytoplasm</location>
    </subcellularLocation>
</comment>
<comment type="similarity">
    <text evidence="1">Belongs to the QueA family.</text>
</comment>
<sequence length="345" mass="38161">MRVADFSFDLPDELIARYPMAQRNASRLLTLDGNSGALGDKQFTDLLEMINPGDLMVFNNTRVIPARMFGQKASGGKLEILVERMLDDKRILAHVRSSKSPKVDSLIHLDGGYQMKMVARHDTLFELELLSELTILEVLEAVGHMPLPPYIDRPDEDADKERYQTVYNQNPGAVAAPTAGLHFDDAMLDALKAKGVNIAFVTLHVGAGTFQPVRVDTIVEHKMHSEWANVPQDVVDLIAQTKAAGKRVVAVGTTSVRSLESAARASLGELKAFSGDTDIFIYPGYQFQVVDAMVTNFHLPESTLIMLVSAFAGFDHVMAAYQHAITQKYRFFSYGDAMFVTKKAH</sequence>
<dbReference type="EC" id="2.4.99.17" evidence="1"/>
<dbReference type="EMBL" id="CP000503">
    <property type="protein sequence ID" value="ABM24361.1"/>
    <property type="molecule type" value="Genomic_DNA"/>
</dbReference>
<dbReference type="RefSeq" id="WP_011788862.1">
    <property type="nucleotide sequence ID" value="NC_008750.1"/>
</dbReference>
<dbReference type="SMR" id="A1RI66"/>
<dbReference type="KEGG" id="shw:Sputw3181_1523"/>
<dbReference type="HOGENOM" id="CLU_039110_1_0_6"/>
<dbReference type="UniPathway" id="UPA00392"/>
<dbReference type="Proteomes" id="UP000002597">
    <property type="component" value="Chromosome"/>
</dbReference>
<dbReference type="GO" id="GO:0005737">
    <property type="term" value="C:cytoplasm"/>
    <property type="evidence" value="ECO:0007669"/>
    <property type="project" value="UniProtKB-SubCell"/>
</dbReference>
<dbReference type="GO" id="GO:0051075">
    <property type="term" value="F:S-adenosylmethionine:tRNA ribosyltransferase-isomerase activity"/>
    <property type="evidence" value="ECO:0007669"/>
    <property type="project" value="UniProtKB-EC"/>
</dbReference>
<dbReference type="GO" id="GO:0008616">
    <property type="term" value="P:queuosine biosynthetic process"/>
    <property type="evidence" value="ECO:0007669"/>
    <property type="project" value="UniProtKB-UniRule"/>
</dbReference>
<dbReference type="GO" id="GO:0002099">
    <property type="term" value="P:tRNA wobble guanine modification"/>
    <property type="evidence" value="ECO:0007669"/>
    <property type="project" value="TreeGrafter"/>
</dbReference>
<dbReference type="FunFam" id="2.40.10.240:FF:000001">
    <property type="entry name" value="S-adenosylmethionine:tRNA ribosyltransferase-isomerase"/>
    <property type="match status" value="1"/>
</dbReference>
<dbReference type="FunFam" id="3.40.1780.10:FF:000001">
    <property type="entry name" value="S-adenosylmethionine:tRNA ribosyltransferase-isomerase"/>
    <property type="match status" value="1"/>
</dbReference>
<dbReference type="Gene3D" id="2.40.10.240">
    <property type="entry name" value="QueA-like"/>
    <property type="match status" value="1"/>
</dbReference>
<dbReference type="Gene3D" id="3.40.1780.10">
    <property type="entry name" value="QueA-like"/>
    <property type="match status" value="1"/>
</dbReference>
<dbReference type="HAMAP" id="MF_00113">
    <property type="entry name" value="QueA"/>
    <property type="match status" value="1"/>
</dbReference>
<dbReference type="InterPro" id="IPR003699">
    <property type="entry name" value="QueA"/>
</dbReference>
<dbReference type="InterPro" id="IPR042118">
    <property type="entry name" value="QueA_dom1"/>
</dbReference>
<dbReference type="InterPro" id="IPR042119">
    <property type="entry name" value="QueA_dom2"/>
</dbReference>
<dbReference type="InterPro" id="IPR036100">
    <property type="entry name" value="QueA_sf"/>
</dbReference>
<dbReference type="NCBIfam" id="NF001140">
    <property type="entry name" value="PRK00147.1"/>
    <property type="match status" value="1"/>
</dbReference>
<dbReference type="NCBIfam" id="TIGR00113">
    <property type="entry name" value="queA"/>
    <property type="match status" value="1"/>
</dbReference>
<dbReference type="PANTHER" id="PTHR30307">
    <property type="entry name" value="S-ADENOSYLMETHIONINE:TRNA RIBOSYLTRANSFERASE-ISOMERASE"/>
    <property type="match status" value="1"/>
</dbReference>
<dbReference type="PANTHER" id="PTHR30307:SF0">
    <property type="entry name" value="S-ADENOSYLMETHIONINE:TRNA RIBOSYLTRANSFERASE-ISOMERASE"/>
    <property type="match status" value="1"/>
</dbReference>
<dbReference type="Pfam" id="PF02547">
    <property type="entry name" value="Queuosine_synth"/>
    <property type="match status" value="1"/>
</dbReference>
<dbReference type="SUPFAM" id="SSF111337">
    <property type="entry name" value="QueA-like"/>
    <property type="match status" value="1"/>
</dbReference>
<reference key="1">
    <citation type="submission" date="2006-12" db="EMBL/GenBank/DDBJ databases">
        <title>Complete sequence of Shewanella sp. W3-18-1.</title>
        <authorList>
            <consortium name="US DOE Joint Genome Institute"/>
            <person name="Copeland A."/>
            <person name="Lucas S."/>
            <person name="Lapidus A."/>
            <person name="Barry K."/>
            <person name="Detter J.C."/>
            <person name="Glavina del Rio T."/>
            <person name="Hammon N."/>
            <person name="Israni S."/>
            <person name="Dalin E."/>
            <person name="Tice H."/>
            <person name="Pitluck S."/>
            <person name="Chain P."/>
            <person name="Malfatti S."/>
            <person name="Shin M."/>
            <person name="Vergez L."/>
            <person name="Schmutz J."/>
            <person name="Larimer F."/>
            <person name="Land M."/>
            <person name="Hauser L."/>
            <person name="Kyrpides N."/>
            <person name="Lykidis A."/>
            <person name="Tiedje J."/>
            <person name="Richardson P."/>
        </authorList>
    </citation>
    <scope>NUCLEOTIDE SEQUENCE [LARGE SCALE GENOMIC DNA]</scope>
    <source>
        <strain>W3-18-1</strain>
    </source>
</reference>
<evidence type="ECO:0000255" key="1">
    <source>
        <dbReference type="HAMAP-Rule" id="MF_00113"/>
    </source>
</evidence>
<gene>
    <name evidence="1" type="primary">queA</name>
    <name type="ordered locus">Sputw3181_1523</name>
</gene>
<keyword id="KW-0963">Cytoplasm</keyword>
<keyword id="KW-0671">Queuosine biosynthesis</keyword>
<keyword id="KW-0949">S-adenosyl-L-methionine</keyword>
<keyword id="KW-0808">Transferase</keyword>
<accession>A1RI66</accession>
<name>QUEA_SHESW</name>